<evidence type="ECO:0000250" key="1"/>
<evidence type="ECO:0000255" key="2"/>
<evidence type="ECO:0000269" key="3">
    <source>
    </source>
</evidence>
<evidence type="ECO:0000269" key="4">
    <source>
    </source>
</evidence>
<evidence type="ECO:0000305" key="5"/>
<keyword id="KW-1003">Cell membrane</keyword>
<keyword id="KW-0325">Glycoprotein</keyword>
<keyword id="KW-0472">Membrane</keyword>
<keyword id="KW-1185">Reference proteome</keyword>
<keyword id="KW-0732">Signal</keyword>
<keyword id="KW-0812">Transmembrane</keyword>
<keyword id="KW-0879">Wnt signaling pathway</keyword>
<dbReference type="EMBL" id="AB124571">
    <property type="protein sequence ID" value="BAD74121.1"/>
    <property type="molecule type" value="mRNA"/>
</dbReference>
<dbReference type="EMBL" id="AB196971">
    <property type="protein sequence ID" value="BAE02562.1"/>
    <property type="molecule type" value="mRNA"/>
</dbReference>
<dbReference type="RefSeq" id="NP_001012959.1">
    <property type="nucleotide sequence ID" value="NM_001012941.2"/>
</dbReference>
<dbReference type="SMR" id="Q5R2I8"/>
<dbReference type="FunCoup" id="Q5R2I8">
    <property type="interactions" value="135"/>
</dbReference>
<dbReference type="STRING" id="9031.ENSGALP00000065748"/>
<dbReference type="GlyCosmos" id="Q5R2I8">
    <property type="glycosylation" value="3 sites, No reported glycans"/>
</dbReference>
<dbReference type="GlyGen" id="Q5R2I8">
    <property type="glycosylation" value="3 sites"/>
</dbReference>
<dbReference type="PaxDb" id="9031-ENSGALP00000001313"/>
<dbReference type="GeneID" id="426765"/>
<dbReference type="KEGG" id="gga:426765"/>
<dbReference type="CTD" id="147495"/>
<dbReference type="VEuPathDB" id="HostDB:geneid_426765"/>
<dbReference type="eggNOG" id="ENOG502QQ0C">
    <property type="taxonomic scope" value="Eukaryota"/>
</dbReference>
<dbReference type="HOGENOM" id="CLU_035648_0_0_1"/>
<dbReference type="InParanoid" id="Q5R2I8"/>
<dbReference type="OMA" id="MPLIQCT"/>
<dbReference type="OrthoDB" id="5985602at2759"/>
<dbReference type="PhylomeDB" id="Q5R2I8"/>
<dbReference type="TreeFam" id="TF329491"/>
<dbReference type="PRO" id="PR:Q5R2I8"/>
<dbReference type="Proteomes" id="UP000000539">
    <property type="component" value="Chromosome 2"/>
</dbReference>
<dbReference type="Bgee" id="ENSGALG00000050840">
    <property type="expression patterns" value="Expressed in lung and 11 other cell types or tissues"/>
</dbReference>
<dbReference type="GO" id="GO:0005886">
    <property type="term" value="C:plasma membrane"/>
    <property type="evidence" value="ECO:0000250"/>
    <property type="project" value="UniProtKB"/>
</dbReference>
<dbReference type="GO" id="GO:0017147">
    <property type="term" value="F:Wnt-protein binding"/>
    <property type="evidence" value="ECO:0000250"/>
    <property type="project" value="UniProtKB"/>
</dbReference>
<dbReference type="GO" id="GO:0030178">
    <property type="term" value="P:negative regulation of Wnt signaling pathway"/>
    <property type="evidence" value="ECO:0000314"/>
    <property type="project" value="UniProtKB"/>
</dbReference>
<dbReference type="GO" id="GO:0016055">
    <property type="term" value="P:Wnt signaling pathway"/>
    <property type="evidence" value="ECO:0007669"/>
    <property type="project" value="UniProtKB-KW"/>
</dbReference>
<dbReference type="InterPro" id="IPR042425">
    <property type="entry name" value="APCDD1"/>
</dbReference>
<dbReference type="InterPro" id="IPR029405">
    <property type="entry name" value="APCDD1_dom"/>
</dbReference>
<dbReference type="PANTHER" id="PTHR31021">
    <property type="entry name" value="ADENOMATOSIS POLYPOSIS COLI DOWN-REGULATED 1"/>
    <property type="match status" value="1"/>
</dbReference>
<dbReference type="PANTHER" id="PTHR31021:SF2">
    <property type="entry name" value="PROTEIN APCDD1"/>
    <property type="match status" value="1"/>
</dbReference>
<dbReference type="Pfam" id="PF14921">
    <property type="entry name" value="APCDDC"/>
    <property type="match status" value="2"/>
</dbReference>
<dbReference type="SMART" id="SM01352">
    <property type="entry name" value="APCDDC"/>
    <property type="match status" value="2"/>
</dbReference>
<feature type="signal peptide" evidence="2">
    <location>
        <begin position="1"/>
        <end position="26"/>
    </location>
</feature>
<feature type="chain" id="PRO_0000395838" description="Protein APCDD1">
    <location>
        <begin position="27"/>
        <end position="515"/>
    </location>
</feature>
<feature type="topological domain" description="Extracellular" evidence="2">
    <location>
        <begin position="27"/>
        <end position="490"/>
    </location>
</feature>
<feature type="transmembrane region" evidence="2">
    <location>
        <begin position="491"/>
        <end position="508"/>
    </location>
</feature>
<feature type="topological domain" description="Cytoplasmic" evidence="2">
    <location>
        <begin position="509"/>
        <end position="515"/>
    </location>
</feature>
<feature type="glycosylation site" description="N-linked (GlcNAc...) asparagine" evidence="2">
    <location>
        <position position="100"/>
    </location>
</feature>
<feature type="glycosylation site" description="N-linked (GlcNAc...) asparagine" evidence="2">
    <location>
        <position position="168"/>
    </location>
</feature>
<feature type="glycosylation site" description="N-linked (GlcNAc...) asparagine" evidence="2">
    <location>
        <position position="319"/>
    </location>
</feature>
<proteinExistence type="evidence at transcript level"/>
<gene>
    <name type="primary">APCDD1</name>
    <name type="synonym">PGO1</name>
</gene>
<comment type="function">
    <text evidence="4">Negative regulator of the Wnt signaling pathway. Inhibits Wnt signaling in a cell-autonomous manner and functions upstream of beta-catenin.</text>
</comment>
<comment type="subcellular location">
    <subcellularLocation>
        <location evidence="1">Cell membrane</location>
        <topology evidence="1">Single-pass type I membrane protein</topology>
    </subcellularLocation>
</comment>
<comment type="developmental stage">
    <text evidence="3">Expressed in the dorsal somite derivatives of the chicken as well as in the dorsal subpopulation of trunk crest cells.</text>
</comment>
<comment type="similarity">
    <text evidence="5">Belongs to the APCDD1 family.</text>
</comment>
<sequence length="515" mass="59100">MFVPYGSLMRYLFPALLLHGLGEGSALLHPDSRSHPRSLEKSAWRAFKESQCHHMLKHLHNGARITVQMPPNIEGHWVSTGCEVRAGPEFITRSYRFYHNNTFKAYQFYYGGNRCTNPIYTLVIRGKIRLRQASWIIRGGTEADYQLRNIQIISHNEAVAKKLSELVNNTCPGFIPEDSPWEQDVSYDLLREENGCECTKALNFAMHELQLIRVEKQYLHHNLDHLVEELFLGDIHTDATQRRYYRPSSYQPPLQNAKNHDRTCIACRIIYRSDEHHPPILPPKADLTIGLHGEWVSQRCEVRPEVLFLTRHFIFHDNNNTWEGHYYHYSDPICKHPTFTIYAKGRYSRGVHSAKVMGGTEFVFKVNHMKVTPMDVSTASLLNVFNGNECGAQGSWQVGVQQDVTHTNGCIALGIRLPHTEYEIFKMEQDARGRYLLYNGQRPSDGSSPDRPEKRATSYQMPLIQCASSVPRSEESPEENKIRLYSSRAPAKHPSASALALVLFICTVSYWDILS</sequence>
<reference key="1">
    <citation type="journal article" date="2005" name="Evol. Dev.">
        <title>Comprehensive survey of carapacial ridge-specific genes in turtle implies co-option of some regulatory genes in carapace evolution.</title>
        <authorList>
            <person name="Kuraku S."/>
            <person name="Usuda R."/>
            <person name="Kuratani S."/>
        </authorList>
    </citation>
    <scope>NUCLEOTIDE SEQUENCE [MRNA]</scope>
    <scope>DEVELOPMENTAL STAGE</scope>
    <source>
        <tissue>Embryo</tissue>
    </source>
</reference>
<reference key="2">
    <citation type="submission" date="2004-12" db="EMBL/GenBank/DDBJ databases">
        <title>Primglo, a Wnt target novel endoplasmic reticulum protein that modulates Wnt signaling.</title>
        <authorList>
            <person name="Kimura J."/>
            <person name="Kuroiwa A."/>
        </authorList>
    </citation>
    <scope>NUCLEOTIDE SEQUENCE [MRNA]</scope>
</reference>
<reference key="3">
    <citation type="journal article" date="2010" name="Nature">
        <title>APCDD1 is a novel Wnt inhibitor mutated in hereditary hypotrichosis simplex.</title>
        <authorList>
            <person name="Shimomura Y."/>
            <person name="Agalliu D."/>
            <person name="Vonica A."/>
            <person name="Luria V."/>
            <person name="Wajid M."/>
            <person name="Baumer A."/>
            <person name="Belli S."/>
            <person name="Petukhova L."/>
            <person name="Schinzel A."/>
            <person name="Brivanlou A.H."/>
            <person name="Barres B.A."/>
            <person name="Christiano A.M."/>
        </authorList>
    </citation>
    <scope>FUNCTION</scope>
</reference>
<protein>
    <recommendedName>
        <fullName>Protein APCDD1</fullName>
    </recommendedName>
    <alternativeName>
        <fullName>Adenomatosis polyposis coli down-regulated 1 protein homolog</fullName>
        <shortName>cAPCDD1</shortName>
    </alternativeName>
    <alternativeName>
        <fullName>Protein primglo1</fullName>
    </alternativeName>
</protein>
<accession>Q5R2I8</accession>
<organism>
    <name type="scientific">Gallus gallus</name>
    <name type="common">Chicken</name>
    <dbReference type="NCBI Taxonomy" id="9031"/>
    <lineage>
        <taxon>Eukaryota</taxon>
        <taxon>Metazoa</taxon>
        <taxon>Chordata</taxon>
        <taxon>Craniata</taxon>
        <taxon>Vertebrata</taxon>
        <taxon>Euteleostomi</taxon>
        <taxon>Archelosauria</taxon>
        <taxon>Archosauria</taxon>
        <taxon>Dinosauria</taxon>
        <taxon>Saurischia</taxon>
        <taxon>Theropoda</taxon>
        <taxon>Coelurosauria</taxon>
        <taxon>Aves</taxon>
        <taxon>Neognathae</taxon>
        <taxon>Galloanserae</taxon>
        <taxon>Galliformes</taxon>
        <taxon>Phasianidae</taxon>
        <taxon>Phasianinae</taxon>
        <taxon>Gallus</taxon>
    </lineage>
</organism>
<name>APCD1_CHICK</name>